<keyword id="KW-0002">3D-structure</keyword>
<keyword id="KW-0903">Direct protein sequencing</keyword>
<keyword id="KW-0378">Hydrolase</keyword>
<keyword id="KW-0719">Serine esterase</keyword>
<organism>
    <name type="scientific">Geobacillus stearothermophilus</name>
    <name type="common">Bacillus stearothermophilus</name>
    <dbReference type="NCBI Taxonomy" id="1422"/>
    <lineage>
        <taxon>Bacteria</taxon>
        <taxon>Bacillati</taxon>
        <taxon>Bacillota</taxon>
        <taxon>Bacilli</taxon>
        <taxon>Bacillales</taxon>
        <taxon>Anoxybacillaceae</taxon>
        <taxon>Geobacillus</taxon>
    </lineage>
</organism>
<name>EST_GEOSE</name>
<sequence>MKIVPPKPFFFEAGERAVLLLHGFTGNSADVRMLGRFLESKGYTCHAPIYKGHGVPPEELVHTGPDDWWQDVMNGYEFLKNKGYEKIAVAGLSLGGVFSLKLGYTVPIEGIVTMCAPMYIKSEETMYEGVLEYAREYKKREGKSEEQIEQEMEKFKQTPMKTLKALQELIADVRDHLDLIYAPTFVVQARHDEMINPDSANIIYNEIESPVKQIKWYEQSGHVITLDQEKDQLHEDIYAFLESLDW</sequence>
<accession>Q06174</accession>
<accession>Q79M83</accession>
<reference key="1">
    <citation type="journal article" date="1992" name="Biosci. Biotechnol. Biochem.">
        <title>Molecular cloning and structure of the gene for esterase from a thermophilic bacterium, Bacillus stearothermophilus IFO 12550.</title>
        <authorList>
            <person name="Kugimiya W."/>
            <person name="Otani Y."/>
            <person name="Hashimoto Y."/>
        </authorList>
    </citation>
    <scope>NUCLEOTIDE SEQUENCE [GENOMIC DNA]</scope>
    <source>
        <strain>ATCC 12980 / DSM 22 / CCM 2062 / JCM 2501 / NBRC 12550 / NCIMB 8923 / NCTC 10339 / R-35646 / VKM B-510</strain>
    </source>
</reference>
<reference key="2">
    <citation type="journal article" date="2004" name="Gene">
        <title>Molecular cloning and characterization of two thermostable carboxyl esterases from Geobacillus stearothermophilus.</title>
        <authorList>
            <person name="Ewis H.E."/>
            <person name="Abdelal A.T."/>
            <person name="Lu C.D."/>
        </authorList>
    </citation>
    <scope>NUCLEOTIDE SEQUENCE [GENOMIC DNA]</scope>
    <scope>PROTEIN SEQUENCE OF 1-10</scope>
    <scope>CATALYTIC ACTIVITY</scope>
    <scope>SUBSTRATE SPECIFICITY</scope>
    <scope>BIOPHYSICOCHEMICAL PROPERTIES</scope>
    <scope>SUBUNIT</scope>
    <scope>REACTION MECHANISM</scope>
    <source>
        <strain>ATCC 29609 / DSM 2027 / NCA 1503 / NCIMB 8924</strain>
    </source>
</reference>
<reference key="3">
    <citation type="journal article" date="2004" name="J. Mol. Biol.">
        <title>Covalent reaction intermediate revealed in crystal structure of the Geobacillus stearothermophilus carboxylesterase Est30.</title>
        <authorList>
            <person name="Liu P."/>
            <person name="Wang Y.-F."/>
            <person name="Ewis H.E."/>
            <person name="Abdelal A.T."/>
            <person name="Lu C.-D."/>
            <person name="Harrison R.W."/>
            <person name="Weber I.T."/>
        </authorList>
    </citation>
    <scope>X-RAY CRYSTALLOGRAPHY (1.63 ANGSTROMS) IN COMPLEX WITH SUBSTRATE</scope>
</reference>
<evidence type="ECO:0000269" key="1">
    <source>
    </source>
</evidence>
<evidence type="ECO:0000269" key="2">
    <source>
    </source>
</evidence>
<evidence type="ECO:0000305" key="3"/>
<evidence type="ECO:0007829" key="4">
    <source>
        <dbReference type="PDB" id="1TQH"/>
    </source>
</evidence>
<proteinExistence type="evidence at protein level"/>
<protein>
    <recommendedName>
        <fullName>Carboxylesterase</fullName>
        <ecNumber>3.1.1.1</ecNumber>
    </recommendedName>
</protein>
<feature type="chain" id="PRO_0000008548" description="Carboxylesterase">
    <location>
        <begin position="1"/>
        <end position="246"/>
    </location>
</feature>
<feature type="active site" description="Nucleophile">
    <location>
        <position position="93"/>
    </location>
</feature>
<feature type="active site" description="Charge relay system">
    <location>
        <position position="192"/>
    </location>
</feature>
<feature type="active site" description="Charge relay system">
    <location>
        <position position="222"/>
    </location>
</feature>
<feature type="strand" evidence="4">
    <location>
        <begin position="9"/>
        <end position="11"/>
    </location>
</feature>
<feature type="strand" evidence="4">
    <location>
        <begin position="17"/>
        <end position="21"/>
    </location>
</feature>
<feature type="helix" evidence="4">
    <location>
        <begin position="29"/>
        <end position="40"/>
    </location>
</feature>
<feature type="strand" evidence="4">
    <location>
        <begin position="44"/>
        <end position="47"/>
    </location>
</feature>
<feature type="strand" evidence="4">
    <location>
        <begin position="53"/>
        <end position="55"/>
    </location>
</feature>
<feature type="helix" evidence="4">
    <location>
        <begin position="57"/>
        <end position="60"/>
    </location>
</feature>
<feature type="helix" evidence="4">
    <location>
        <begin position="65"/>
        <end position="81"/>
    </location>
</feature>
<feature type="strand" evidence="4">
    <location>
        <begin position="87"/>
        <end position="92"/>
    </location>
</feature>
<feature type="helix" evidence="4">
    <location>
        <begin position="94"/>
        <end position="103"/>
    </location>
</feature>
<feature type="strand" evidence="4">
    <location>
        <begin position="111"/>
        <end position="115"/>
    </location>
</feature>
<feature type="helix" evidence="4">
    <location>
        <begin position="123"/>
        <end position="141"/>
    </location>
</feature>
<feature type="helix" evidence="4">
    <location>
        <begin position="145"/>
        <end position="155"/>
    </location>
</feature>
<feature type="helix" evidence="4">
    <location>
        <begin position="163"/>
        <end position="175"/>
    </location>
</feature>
<feature type="helix" evidence="4">
    <location>
        <begin position="176"/>
        <end position="179"/>
    </location>
</feature>
<feature type="strand" evidence="4">
    <location>
        <begin position="184"/>
        <end position="189"/>
    </location>
</feature>
<feature type="strand" evidence="4">
    <location>
        <begin position="193"/>
        <end position="195"/>
    </location>
</feature>
<feature type="helix" evidence="4">
    <location>
        <begin position="199"/>
        <end position="206"/>
    </location>
</feature>
<feature type="strand" evidence="4">
    <location>
        <begin position="210"/>
        <end position="217"/>
    </location>
</feature>
<feature type="helix" evidence="4">
    <location>
        <begin position="224"/>
        <end position="226"/>
    </location>
</feature>
<feature type="helix" evidence="4">
    <location>
        <begin position="230"/>
        <end position="243"/>
    </location>
</feature>
<gene>
    <name type="primary">est</name>
    <name type="synonym">est30</name>
</gene>
<dbReference type="EC" id="3.1.1.1"/>
<dbReference type="EMBL" id="D12681">
    <property type="protein sequence ID" value="BAA02182.1"/>
    <property type="status" value="ALT_INIT"/>
    <property type="molecule type" value="Genomic_DNA"/>
</dbReference>
<dbReference type="EMBL" id="AY186197">
    <property type="protein sequence ID" value="AAN81911.1"/>
    <property type="status" value="ALT_INIT"/>
    <property type="molecule type" value="Genomic_DNA"/>
</dbReference>
<dbReference type="PIR" id="JC1374">
    <property type="entry name" value="JC1374"/>
</dbReference>
<dbReference type="PDB" id="1R1D">
    <property type="method" value="X-ray"/>
    <property type="resolution" value="2.00 A"/>
    <property type="chains" value="A/B=1-246"/>
</dbReference>
<dbReference type="PDB" id="1TQH">
    <property type="method" value="X-ray"/>
    <property type="resolution" value="1.63 A"/>
    <property type="chains" value="A=1-246"/>
</dbReference>
<dbReference type="PDB" id="8ILT">
    <property type="method" value="X-ray"/>
    <property type="resolution" value="2.42 A"/>
    <property type="chains" value="A/B/C/D/E/F/G/H/I=1-246"/>
</dbReference>
<dbReference type="PDBsum" id="1R1D"/>
<dbReference type="PDBsum" id="1TQH"/>
<dbReference type="PDBsum" id="8ILT"/>
<dbReference type="SMR" id="Q06174"/>
<dbReference type="DrugBank" id="DB01670">
    <property type="generic name" value="Propyl acetate"/>
</dbReference>
<dbReference type="ESTHER" id="geost-est30">
    <property type="family name" value="CarbLipBact_1"/>
</dbReference>
<dbReference type="MEROPS" id="S09.946"/>
<dbReference type="BRENDA" id="3.1.1.1">
    <property type="organism ID" value="623"/>
</dbReference>
<dbReference type="SABIO-RK" id="Q06174"/>
<dbReference type="EvolutionaryTrace" id="Q06174"/>
<dbReference type="GO" id="GO:0106435">
    <property type="term" value="F:carboxylesterase activity"/>
    <property type="evidence" value="ECO:0007669"/>
    <property type="project" value="UniProtKB-EC"/>
</dbReference>
<dbReference type="FunFam" id="3.40.50.1820:FF:000070">
    <property type="entry name" value="Carboxylesterase"/>
    <property type="match status" value="1"/>
</dbReference>
<dbReference type="Gene3D" id="3.40.50.1820">
    <property type="entry name" value="alpha/beta hydrolase"/>
    <property type="match status" value="1"/>
</dbReference>
<dbReference type="InterPro" id="IPR029058">
    <property type="entry name" value="AB_hydrolase_fold"/>
</dbReference>
<dbReference type="InterPro" id="IPR012354">
    <property type="entry name" value="Esterase_lipase"/>
</dbReference>
<dbReference type="InterPro" id="IPR022742">
    <property type="entry name" value="Hydrolase_4"/>
</dbReference>
<dbReference type="InterPro" id="IPR051044">
    <property type="entry name" value="MAG_DAG_Lipase"/>
</dbReference>
<dbReference type="PANTHER" id="PTHR11614">
    <property type="entry name" value="PHOSPHOLIPASE-RELATED"/>
    <property type="match status" value="1"/>
</dbReference>
<dbReference type="Pfam" id="PF12146">
    <property type="entry name" value="Hydrolase_4"/>
    <property type="match status" value="1"/>
</dbReference>
<dbReference type="PIRSF" id="PIRSF017388">
    <property type="entry name" value="Esterase_lipase"/>
    <property type="match status" value="1"/>
</dbReference>
<dbReference type="SUPFAM" id="SSF53474">
    <property type="entry name" value="alpha/beta-Hydrolases"/>
    <property type="match status" value="1"/>
</dbReference>
<comment type="function">
    <text>Involved in the detoxification of xenobiotics. Shows maximal activity with C6 substrates, with gradually decreasing activity from C8 to C12 substrates. No activity for higher chain length substrates acids rather than long-chain ones.</text>
</comment>
<comment type="catalytic activity">
    <reaction evidence="1">
        <text>a carboxylic ester + H2O = an alcohol + a carboxylate + H(+)</text>
        <dbReference type="Rhea" id="RHEA:21164"/>
        <dbReference type="ChEBI" id="CHEBI:15377"/>
        <dbReference type="ChEBI" id="CHEBI:15378"/>
        <dbReference type="ChEBI" id="CHEBI:29067"/>
        <dbReference type="ChEBI" id="CHEBI:30879"/>
        <dbReference type="ChEBI" id="CHEBI:33308"/>
        <dbReference type="EC" id="3.1.1.1"/>
    </reaction>
</comment>
<comment type="biophysicochemical properties">
    <kinetics>
        <KM evidence="1">2.16 uM for p-nitrophenyl caproate (at 60 degrees Celsius)</KM>
    </kinetics>
    <phDependence>
        <text evidence="1">Optimum pH is 9.</text>
    </phDependence>
    <temperatureDependence>
        <text evidence="1">Optimum temperature is 70 degrees Celsius.</text>
    </temperatureDependence>
</comment>
<comment type="subunit">
    <text evidence="1 2">Homodimer.</text>
</comment>
<comment type="similarity">
    <text evidence="3">Belongs to the lipase/esterase LIP3/BchO family.</text>
</comment>
<comment type="sequence caution" evidence="3">
    <conflict type="erroneous initiation">
        <sequence resource="EMBL-CDS" id="AAN81911"/>
    </conflict>
</comment>
<comment type="sequence caution" evidence="3">
    <conflict type="erroneous initiation">
        <sequence resource="EMBL-CDS" id="BAA02182"/>
    </conflict>
</comment>